<dbReference type="EC" id="2.3.1.199" evidence="2 3"/>
<dbReference type="EMBL" id="AB169728">
    <property type="protein sequence ID" value="BAE01809.1"/>
    <property type="molecule type" value="mRNA"/>
</dbReference>
<dbReference type="RefSeq" id="NP_001306343.1">
    <property type="nucleotide sequence ID" value="NM_001319414.1"/>
</dbReference>
<dbReference type="SMR" id="Q4R516"/>
<dbReference type="STRING" id="9541.ENSMFAP00000000870"/>
<dbReference type="eggNOG" id="KOG3071">
    <property type="taxonomic scope" value="Eukaryota"/>
</dbReference>
<dbReference type="UniPathway" id="UPA00658"/>
<dbReference type="Proteomes" id="UP000233100">
    <property type="component" value="Unplaced"/>
</dbReference>
<dbReference type="GO" id="GO:0030425">
    <property type="term" value="C:dendrite"/>
    <property type="evidence" value="ECO:0007669"/>
    <property type="project" value="UniProtKB-SubCell"/>
</dbReference>
<dbReference type="GO" id="GO:0097447">
    <property type="term" value="C:dendritic tree"/>
    <property type="evidence" value="ECO:0000250"/>
    <property type="project" value="UniProtKB"/>
</dbReference>
<dbReference type="GO" id="GO:0005789">
    <property type="term" value="C:endoplasmic reticulum membrane"/>
    <property type="evidence" value="ECO:0007669"/>
    <property type="project" value="UniProtKB-SubCell"/>
</dbReference>
<dbReference type="GO" id="GO:0043025">
    <property type="term" value="C:neuronal cell body"/>
    <property type="evidence" value="ECO:0000250"/>
    <property type="project" value="UniProtKB"/>
</dbReference>
<dbReference type="GO" id="GO:0009922">
    <property type="term" value="F:fatty acid elongase activity"/>
    <property type="evidence" value="ECO:0000250"/>
    <property type="project" value="UniProtKB"/>
</dbReference>
<dbReference type="GO" id="GO:0034625">
    <property type="term" value="P:fatty acid elongation, monounsaturated fatty acid"/>
    <property type="evidence" value="ECO:0000250"/>
    <property type="project" value="UniProtKB"/>
</dbReference>
<dbReference type="GO" id="GO:0034626">
    <property type="term" value="P:fatty acid elongation, polyunsaturated fatty acid"/>
    <property type="evidence" value="ECO:0000250"/>
    <property type="project" value="UniProtKB"/>
</dbReference>
<dbReference type="GO" id="GO:0019367">
    <property type="term" value="P:fatty acid elongation, saturated fatty acid"/>
    <property type="evidence" value="ECO:0007669"/>
    <property type="project" value="InterPro"/>
</dbReference>
<dbReference type="GO" id="GO:0035338">
    <property type="term" value="P:long-chain fatty-acyl-CoA biosynthetic process"/>
    <property type="evidence" value="ECO:0007669"/>
    <property type="project" value="UniProtKB-UniRule"/>
</dbReference>
<dbReference type="GO" id="GO:0030148">
    <property type="term" value="P:sphingolipid biosynthetic process"/>
    <property type="evidence" value="ECO:0007669"/>
    <property type="project" value="TreeGrafter"/>
</dbReference>
<dbReference type="GO" id="GO:0006636">
    <property type="term" value="P:unsaturated fatty acid biosynthetic process"/>
    <property type="evidence" value="ECO:0007669"/>
    <property type="project" value="UniProtKB-UniRule"/>
</dbReference>
<dbReference type="GO" id="GO:0042761">
    <property type="term" value="P:very long-chain fatty acid biosynthetic process"/>
    <property type="evidence" value="ECO:0000250"/>
    <property type="project" value="UniProtKB"/>
</dbReference>
<dbReference type="HAMAP" id="MF_03205">
    <property type="entry name" value="VLCF_elongase_5"/>
    <property type="match status" value="1"/>
</dbReference>
<dbReference type="InterPro" id="IPR002076">
    <property type="entry name" value="ELO_fam"/>
</dbReference>
<dbReference type="InterPro" id="IPR033677">
    <property type="entry name" value="ELOVL5"/>
</dbReference>
<dbReference type="PANTHER" id="PTHR11157:SF18">
    <property type="entry name" value="ELONGATION OF VERY LONG CHAIN FATTY ACIDS PROTEIN 5"/>
    <property type="match status" value="1"/>
</dbReference>
<dbReference type="PANTHER" id="PTHR11157">
    <property type="entry name" value="FATTY ACID ACYL TRANSFERASE-RELATED"/>
    <property type="match status" value="1"/>
</dbReference>
<dbReference type="Pfam" id="PF01151">
    <property type="entry name" value="ELO"/>
    <property type="match status" value="1"/>
</dbReference>
<name>ELOV5_MACFA</name>
<feature type="chain" id="PRO_0000282839" description="Very long chain fatty acid elongase 5">
    <location>
        <begin position="1"/>
        <end position="299"/>
    </location>
</feature>
<feature type="transmembrane region" description="Helical" evidence="3">
    <location>
        <begin position="26"/>
        <end position="46"/>
    </location>
</feature>
<feature type="transmembrane region" description="Helical" evidence="3">
    <location>
        <begin position="64"/>
        <end position="84"/>
    </location>
</feature>
<feature type="transmembrane region" description="Helical" evidence="3">
    <location>
        <begin position="112"/>
        <end position="132"/>
    </location>
</feature>
<feature type="transmembrane region" description="Helical" evidence="3">
    <location>
        <begin position="150"/>
        <end position="170"/>
    </location>
</feature>
<feature type="transmembrane region" description="Helical" evidence="3">
    <location>
        <begin position="205"/>
        <end position="225"/>
    </location>
</feature>
<feature type="transmembrane region" description="Helical" evidence="3">
    <location>
        <begin position="226"/>
        <end position="246"/>
    </location>
</feature>
<feature type="region of interest" description="Disordered" evidence="4">
    <location>
        <begin position="275"/>
        <end position="299"/>
    </location>
</feature>
<feature type="compositionally biased region" description="Polar residues" evidence="4">
    <location>
        <begin position="279"/>
        <end position="288"/>
    </location>
</feature>
<feature type="modified residue" description="N-acetylmethionine" evidence="2">
    <location>
        <position position="1"/>
    </location>
</feature>
<feature type="modified residue" description="Phosphoserine" evidence="2">
    <location>
        <position position="285"/>
    </location>
</feature>
<accession>Q4R516</accession>
<organism>
    <name type="scientific">Macaca fascicularis</name>
    <name type="common">Crab-eating macaque</name>
    <name type="synonym">Cynomolgus monkey</name>
    <dbReference type="NCBI Taxonomy" id="9541"/>
    <lineage>
        <taxon>Eukaryota</taxon>
        <taxon>Metazoa</taxon>
        <taxon>Chordata</taxon>
        <taxon>Craniata</taxon>
        <taxon>Vertebrata</taxon>
        <taxon>Euteleostomi</taxon>
        <taxon>Mammalia</taxon>
        <taxon>Eutheria</taxon>
        <taxon>Euarchontoglires</taxon>
        <taxon>Primates</taxon>
        <taxon>Haplorrhini</taxon>
        <taxon>Catarrhini</taxon>
        <taxon>Cercopithecidae</taxon>
        <taxon>Cercopithecinae</taxon>
        <taxon>Macaca</taxon>
    </lineage>
</organism>
<comment type="function">
    <text evidence="1 3">Catalyzes the first and rate-limiting reaction of the four reactions that constitute the long-chain fatty acids elongation cycle. This endoplasmic reticulum-bound enzymatic process allows the addition of 2 carbons to the chain of long- and very long-chain fatty acids (VLCFAs) per cycle. Condensing enzyme that acts specifically toward polyunsaturated acyl-CoA with the higher activity toward C18:3(n-6) acyl-CoA. May participate in the production of monounsaturated and of polyunsaturated VLCFAs of different chain lengths that are involved in multiple biological processes as precursors of membrane lipids and lipid mediators (By similarity). In conditions where the essential linoleic and alpha linoleic fatty acids are lacking it is also involved in the synthesis of Mead acid from oleic acid (By similarity).</text>
</comment>
<comment type="catalytic activity">
    <reaction evidence="3">
        <text>a very-long-chain acyl-CoA + malonyl-CoA + H(+) = a very-long-chain 3-oxoacyl-CoA + CO2 + CoA</text>
        <dbReference type="Rhea" id="RHEA:32727"/>
        <dbReference type="ChEBI" id="CHEBI:15378"/>
        <dbReference type="ChEBI" id="CHEBI:16526"/>
        <dbReference type="ChEBI" id="CHEBI:57287"/>
        <dbReference type="ChEBI" id="CHEBI:57384"/>
        <dbReference type="ChEBI" id="CHEBI:90725"/>
        <dbReference type="ChEBI" id="CHEBI:90736"/>
        <dbReference type="EC" id="2.3.1.199"/>
    </reaction>
    <physiologicalReaction direction="left-to-right" evidence="2">
        <dbReference type="Rhea" id="RHEA:32728"/>
    </physiologicalReaction>
</comment>
<comment type="catalytic activity">
    <reaction evidence="2">
        <text>(6Z,9Z,12Z)-octadecatrienoyl-CoA + malonyl-CoA + H(+) = (8Z,11Z,14Z)-3-oxoeicosatrienoyl-CoA + CO2 + CoA</text>
        <dbReference type="Rhea" id="RHEA:35379"/>
        <dbReference type="ChEBI" id="CHEBI:15378"/>
        <dbReference type="ChEBI" id="CHEBI:16526"/>
        <dbReference type="ChEBI" id="CHEBI:57287"/>
        <dbReference type="ChEBI" id="CHEBI:57363"/>
        <dbReference type="ChEBI" id="CHEBI:57384"/>
        <dbReference type="ChEBI" id="CHEBI:71481"/>
    </reaction>
    <physiologicalReaction direction="left-to-right" evidence="2">
        <dbReference type="Rhea" id="RHEA:35380"/>
    </physiologicalReaction>
</comment>
<comment type="catalytic activity">
    <reaction evidence="2">
        <text>(9Z,12Z,15Z)-octadecatrienoyl-CoA + malonyl-CoA + H(+) = (11Z,14Z,17Z)-3-oxoeicosatrienoyl-CoA + CO2 + CoA</text>
        <dbReference type="Rhea" id="RHEA:36523"/>
        <dbReference type="ChEBI" id="CHEBI:15378"/>
        <dbReference type="ChEBI" id="CHEBI:16526"/>
        <dbReference type="ChEBI" id="CHEBI:57287"/>
        <dbReference type="ChEBI" id="CHEBI:57384"/>
        <dbReference type="ChEBI" id="CHEBI:74034"/>
        <dbReference type="ChEBI" id="CHEBI:74054"/>
    </reaction>
    <physiologicalReaction direction="left-to-right" evidence="2">
        <dbReference type="Rhea" id="RHEA:36524"/>
    </physiologicalReaction>
</comment>
<comment type="catalytic activity">
    <reaction evidence="2">
        <text>(9Z)-hexadecenoyl-CoA + malonyl-CoA + H(+) = 3-oxo-(11Z)-octadecenoyl-CoA + CO2 + CoA</text>
        <dbReference type="Rhea" id="RHEA:39675"/>
        <dbReference type="ChEBI" id="CHEBI:15378"/>
        <dbReference type="ChEBI" id="CHEBI:16526"/>
        <dbReference type="ChEBI" id="CHEBI:57287"/>
        <dbReference type="ChEBI" id="CHEBI:57384"/>
        <dbReference type="ChEBI" id="CHEBI:61540"/>
        <dbReference type="ChEBI" id="CHEBI:76555"/>
    </reaction>
    <physiologicalReaction direction="left-to-right" evidence="2">
        <dbReference type="Rhea" id="RHEA:39676"/>
    </physiologicalReaction>
</comment>
<comment type="catalytic activity">
    <reaction evidence="2">
        <text>(9Z)-octadecenoyl-CoA + malonyl-CoA + H(+) = 3-oxo-(11Z)-eicosenoyl-CoA + CO2 + CoA</text>
        <dbReference type="Rhea" id="RHEA:36511"/>
        <dbReference type="ChEBI" id="CHEBI:15378"/>
        <dbReference type="ChEBI" id="CHEBI:16526"/>
        <dbReference type="ChEBI" id="CHEBI:57287"/>
        <dbReference type="ChEBI" id="CHEBI:57384"/>
        <dbReference type="ChEBI" id="CHEBI:57387"/>
        <dbReference type="ChEBI" id="CHEBI:74011"/>
    </reaction>
    <physiologicalReaction direction="left-to-right" evidence="2">
        <dbReference type="Rhea" id="RHEA:36512"/>
    </physiologicalReaction>
</comment>
<comment type="catalytic activity">
    <reaction evidence="2">
        <text>(11Z)-octadecenoyl-CoA + malonyl-CoA + H(+) = 3-oxo-(13Z)-eicosenoyl-CoA + CO2 + CoA</text>
        <dbReference type="Rhea" id="RHEA:39679"/>
        <dbReference type="ChEBI" id="CHEBI:15378"/>
        <dbReference type="ChEBI" id="CHEBI:16526"/>
        <dbReference type="ChEBI" id="CHEBI:57287"/>
        <dbReference type="ChEBI" id="CHEBI:57384"/>
        <dbReference type="ChEBI" id="CHEBI:75121"/>
        <dbReference type="ChEBI" id="CHEBI:76559"/>
    </reaction>
    <physiologicalReaction direction="left-to-right" evidence="2">
        <dbReference type="Rhea" id="RHEA:39680"/>
    </physiologicalReaction>
</comment>
<comment type="catalytic activity">
    <reaction evidence="2">
        <text>(9Z,12Z)-octadecadienoyl-CoA + malonyl-CoA + H(+) = (11Z,14Z)-3-oxoicosa-11,14-dienoyl-CoA + CO2 + CoA</text>
        <dbReference type="Rhea" id="RHEA:36503"/>
        <dbReference type="ChEBI" id="CHEBI:15378"/>
        <dbReference type="ChEBI" id="CHEBI:16526"/>
        <dbReference type="ChEBI" id="CHEBI:57287"/>
        <dbReference type="ChEBI" id="CHEBI:57383"/>
        <dbReference type="ChEBI" id="CHEBI:57384"/>
        <dbReference type="ChEBI" id="CHEBI:74012"/>
    </reaction>
    <physiologicalReaction direction="left-to-right" evidence="2">
        <dbReference type="Rhea" id="RHEA:36504"/>
    </physiologicalReaction>
</comment>
<comment type="catalytic activity">
    <reaction evidence="2">
        <text>(6Z,9Z,12Z,15Z)-octadecatetraenoyl-CoA + malonyl-CoA + H(+) = (8Z,11Z,14Z,17Z)-3-oxoicosatetraenoyl-CoA + CO2 + CoA</text>
        <dbReference type="Rhea" id="RHEA:35391"/>
        <dbReference type="ChEBI" id="CHEBI:15378"/>
        <dbReference type="ChEBI" id="CHEBI:16526"/>
        <dbReference type="ChEBI" id="CHEBI:57287"/>
        <dbReference type="ChEBI" id="CHEBI:57384"/>
        <dbReference type="ChEBI" id="CHEBI:71489"/>
        <dbReference type="ChEBI" id="CHEBI:71491"/>
    </reaction>
    <physiologicalReaction direction="left-to-right" evidence="2">
        <dbReference type="Rhea" id="RHEA:35392"/>
    </physiologicalReaction>
</comment>
<comment type="catalytic activity">
    <reaction evidence="2">
        <text>(5Z,8Z,11Z,14Z)-eicosatetraenoyl-CoA + malonyl-CoA + H(+) = (7Z,10Z,13Z,16Z)-3-oxodocosatetraenoyl-CoA + CO2 + CoA</text>
        <dbReference type="Rhea" id="RHEA:36475"/>
        <dbReference type="ChEBI" id="CHEBI:15378"/>
        <dbReference type="ChEBI" id="CHEBI:16526"/>
        <dbReference type="ChEBI" id="CHEBI:57287"/>
        <dbReference type="ChEBI" id="CHEBI:57368"/>
        <dbReference type="ChEBI" id="CHEBI:57384"/>
        <dbReference type="ChEBI" id="CHEBI:73852"/>
    </reaction>
    <physiologicalReaction direction="left-to-right" evidence="2">
        <dbReference type="Rhea" id="RHEA:36476"/>
    </physiologicalReaction>
</comment>
<comment type="catalytic activity">
    <reaction evidence="2">
        <text>(5Z,8Z,11Z,14Z,17Z)-eicosapentaenoyl-CoA + malonyl-CoA + H(+) = 3-oxo-(7Z,10Z,13Z,16Z,19Z)-docosapentaenoyl-CoA + CO2 + CoA</text>
        <dbReference type="Rhea" id="RHEA:36483"/>
        <dbReference type="ChEBI" id="CHEBI:15378"/>
        <dbReference type="ChEBI" id="CHEBI:16526"/>
        <dbReference type="ChEBI" id="CHEBI:57287"/>
        <dbReference type="ChEBI" id="CHEBI:57384"/>
        <dbReference type="ChEBI" id="CHEBI:73862"/>
        <dbReference type="ChEBI" id="CHEBI:73863"/>
    </reaction>
    <physiologicalReaction direction="left-to-right" evidence="2">
        <dbReference type="Rhea" id="RHEA:36484"/>
    </physiologicalReaction>
</comment>
<comment type="pathway">
    <text evidence="3">Lipid metabolism; polyunsaturated fatty acid biosynthesis.</text>
</comment>
<comment type="subunit">
    <text evidence="2">Interacts with TECR.</text>
</comment>
<comment type="subcellular location">
    <subcellularLocation>
        <location evidence="3">Endoplasmic reticulum membrane</location>
        <topology evidence="3">Multi-pass membrane protein</topology>
    </subcellularLocation>
    <subcellularLocation>
        <location evidence="3">Cell projection</location>
        <location evidence="3">Dendrite</location>
    </subcellularLocation>
    <text evidence="3">In Purkinje cells, the protein localizes to the soma and proximal portion of the dendritic tree.</text>
</comment>
<comment type="similarity">
    <text evidence="3">Belongs to the ELO family. ELOVL5 subfamily.</text>
</comment>
<protein>
    <recommendedName>
        <fullName evidence="3">Very long chain fatty acid elongase 5</fullName>
        <ecNumber evidence="2 3">2.3.1.199</ecNumber>
    </recommendedName>
    <alternativeName>
        <fullName evidence="3">3-keto acyl-CoA synthase ELOVL5</fullName>
    </alternativeName>
    <alternativeName>
        <fullName evidence="3">ELOVL fatty acid elongase 5</fullName>
        <shortName evidence="3">ELOVL FA elongase 5</shortName>
    </alternativeName>
    <alternativeName>
        <fullName evidence="3">Elongation of very long chain fatty acids protein 5</fullName>
    </alternativeName>
    <alternativeName>
        <fullName evidence="3">Very long chain 3-ketoacyl-CoA synthase 5</fullName>
    </alternativeName>
    <alternativeName>
        <fullName evidence="3">Very long chain 3-oxoacyl-CoA synthase 5</fullName>
    </alternativeName>
</protein>
<proteinExistence type="evidence at transcript level"/>
<evidence type="ECO:0000250" key="1">
    <source>
        <dbReference type="UniProtKB" id="Q8BHI7"/>
    </source>
</evidence>
<evidence type="ECO:0000250" key="2">
    <source>
        <dbReference type="UniProtKB" id="Q9NYP7"/>
    </source>
</evidence>
<evidence type="ECO:0000255" key="3">
    <source>
        <dbReference type="HAMAP-Rule" id="MF_03205"/>
    </source>
</evidence>
<evidence type="ECO:0000256" key="4">
    <source>
        <dbReference type="SAM" id="MobiDB-lite"/>
    </source>
</evidence>
<keyword id="KW-0007">Acetylation</keyword>
<keyword id="KW-0966">Cell projection</keyword>
<keyword id="KW-0256">Endoplasmic reticulum</keyword>
<keyword id="KW-0275">Fatty acid biosynthesis</keyword>
<keyword id="KW-0276">Fatty acid metabolism</keyword>
<keyword id="KW-0444">Lipid biosynthesis</keyword>
<keyword id="KW-0443">Lipid metabolism</keyword>
<keyword id="KW-0472">Membrane</keyword>
<keyword id="KW-0597">Phosphoprotein</keyword>
<keyword id="KW-1185">Reference proteome</keyword>
<keyword id="KW-0808">Transferase</keyword>
<keyword id="KW-0812">Transmembrane</keyword>
<keyword id="KW-1133">Transmembrane helix</keyword>
<reference key="1">
    <citation type="submission" date="2005-06" db="EMBL/GenBank/DDBJ databases">
        <title>DNA sequences of macaque genes expressed in brain or testis and its evolutionary implications.</title>
        <authorList>
            <consortium name="International consortium for macaque cDNA sequencing and analysis"/>
        </authorList>
    </citation>
    <scope>NUCLEOTIDE SEQUENCE [LARGE SCALE MRNA]</scope>
    <source>
        <tissue>Frontal cortex</tissue>
    </source>
</reference>
<gene>
    <name evidence="3" type="primary">ELOVL5</name>
    <name type="ORF">QflA-11914</name>
</gene>
<sequence>MEHFDASLSTYFKALLGPRDTRVKGWFLLDNYIPTFICSVIYLLIVWLGPKYMRNKQPFSCRGILVVYNLGLTLLSLYMFCELVTGVWEGKYNFFCQGTRTAGESDMKIIRVLRWYYFSKLIEFMDTFFFILRKNNHQITVLHVYHHASMLNIWWFVMNWVPCGHSYFGATLNSFIHVLMYSYYGLSSVPSMRPYLWWKKYITQGQLLQFVLTIIQTSCGVIWPCTFPLGWLYFQIGYMISLIALFTNFYIQTYNKKGASRRKDHLKDHQNGSVAAVNGHTNSFSPLENNVKPRKLRKD</sequence>